<dbReference type="EC" id="2.1.1.199" evidence="1"/>
<dbReference type="EMBL" id="CU928160">
    <property type="protein sequence ID" value="CAQ96971.1"/>
    <property type="molecule type" value="Genomic_DNA"/>
</dbReference>
<dbReference type="RefSeq" id="WP_000970479.1">
    <property type="nucleotide sequence ID" value="NC_011741.1"/>
</dbReference>
<dbReference type="SMR" id="B7M125"/>
<dbReference type="GeneID" id="86862592"/>
<dbReference type="KEGG" id="ecr:ECIAI1_0081"/>
<dbReference type="HOGENOM" id="CLU_038422_2_0_6"/>
<dbReference type="GO" id="GO:0005737">
    <property type="term" value="C:cytoplasm"/>
    <property type="evidence" value="ECO:0007669"/>
    <property type="project" value="UniProtKB-SubCell"/>
</dbReference>
<dbReference type="GO" id="GO:0071424">
    <property type="term" value="F:rRNA (cytosine-N4-)-methyltransferase activity"/>
    <property type="evidence" value="ECO:0007669"/>
    <property type="project" value="UniProtKB-UniRule"/>
</dbReference>
<dbReference type="GO" id="GO:0070475">
    <property type="term" value="P:rRNA base methylation"/>
    <property type="evidence" value="ECO:0007669"/>
    <property type="project" value="UniProtKB-UniRule"/>
</dbReference>
<dbReference type="FunFam" id="1.10.150.170:FF:000001">
    <property type="entry name" value="Ribosomal RNA small subunit methyltransferase H"/>
    <property type="match status" value="1"/>
</dbReference>
<dbReference type="Gene3D" id="1.10.150.170">
    <property type="entry name" value="Putative methyltransferase TM0872, insert domain"/>
    <property type="match status" value="1"/>
</dbReference>
<dbReference type="Gene3D" id="3.40.50.150">
    <property type="entry name" value="Vaccinia Virus protein VP39"/>
    <property type="match status" value="1"/>
</dbReference>
<dbReference type="HAMAP" id="MF_01007">
    <property type="entry name" value="16SrRNA_methyltr_H"/>
    <property type="match status" value="1"/>
</dbReference>
<dbReference type="InterPro" id="IPR002903">
    <property type="entry name" value="RsmH"/>
</dbReference>
<dbReference type="InterPro" id="IPR023397">
    <property type="entry name" value="SAM-dep_MeTrfase_MraW_recog"/>
</dbReference>
<dbReference type="InterPro" id="IPR029063">
    <property type="entry name" value="SAM-dependent_MTases_sf"/>
</dbReference>
<dbReference type="NCBIfam" id="TIGR00006">
    <property type="entry name" value="16S rRNA (cytosine(1402)-N(4))-methyltransferase RsmH"/>
    <property type="match status" value="1"/>
</dbReference>
<dbReference type="PANTHER" id="PTHR11265:SF0">
    <property type="entry name" value="12S RRNA N4-METHYLCYTIDINE METHYLTRANSFERASE"/>
    <property type="match status" value="1"/>
</dbReference>
<dbReference type="PANTHER" id="PTHR11265">
    <property type="entry name" value="S-ADENOSYL-METHYLTRANSFERASE MRAW"/>
    <property type="match status" value="1"/>
</dbReference>
<dbReference type="Pfam" id="PF01795">
    <property type="entry name" value="Methyltransf_5"/>
    <property type="match status" value="1"/>
</dbReference>
<dbReference type="PIRSF" id="PIRSF004486">
    <property type="entry name" value="MraW"/>
    <property type="match status" value="1"/>
</dbReference>
<dbReference type="SUPFAM" id="SSF81799">
    <property type="entry name" value="Putative methyltransferase TM0872, insert domain"/>
    <property type="match status" value="1"/>
</dbReference>
<dbReference type="SUPFAM" id="SSF53335">
    <property type="entry name" value="S-adenosyl-L-methionine-dependent methyltransferases"/>
    <property type="match status" value="1"/>
</dbReference>
<feature type="chain" id="PRO_0000386884" description="Ribosomal RNA small subunit methyltransferase H">
    <location>
        <begin position="1"/>
        <end position="313"/>
    </location>
</feature>
<feature type="binding site" evidence="1">
    <location>
        <begin position="35"/>
        <end position="37"/>
    </location>
    <ligand>
        <name>S-adenosyl-L-methionine</name>
        <dbReference type="ChEBI" id="CHEBI:59789"/>
    </ligand>
</feature>
<feature type="binding site" evidence="1">
    <location>
        <position position="55"/>
    </location>
    <ligand>
        <name>S-adenosyl-L-methionine</name>
        <dbReference type="ChEBI" id="CHEBI:59789"/>
    </ligand>
</feature>
<feature type="binding site" evidence="1">
    <location>
        <position position="79"/>
    </location>
    <ligand>
        <name>S-adenosyl-L-methionine</name>
        <dbReference type="ChEBI" id="CHEBI:59789"/>
    </ligand>
</feature>
<feature type="binding site" evidence="1">
    <location>
        <position position="101"/>
    </location>
    <ligand>
        <name>S-adenosyl-L-methionine</name>
        <dbReference type="ChEBI" id="CHEBI:59789"/>
    </ligand>
</feature>
<feature type="binding site" evidence="1">
    <location>
        <position position="108"/>
    </location>
    <ligand>
        <name>S-adenosyl-L-methionine</name>
        <dbReference type="ChEBI" id="CHEBI:59789"/>
    </ligand>
</feature>
<evidence type="ECO:0000255" key="1">
    <source>
        <dbReference type="HAMAP-Rule" id="MF_01007"/>
    </source>
</evidence>
<organism>
    <name type="scientific">Escherichia coli O8 (strain IAI1)</name>
    <dbReference type="NCBI Taxonomy" id="585034"/>
    <lineage>
        <taxon>Bacteria</taxon>
        <taxon>Pseudomonadati</taxon>
        <taxon>Pseudomonadota</taxon>
        <taxon>Gammaproteobacteria</taxon>
        <taxon>Enterobacterales</taxon>
        <taxon>Enterobacteriaceae</taxon>
        <taxon>Escherichia</taxon>
    </lineage>
</organism>
<name>RSMH_ECO8A</name>
<comment type="function">
    <text evidence="1">Specifically methylates the N4 position of cytidine in position 1402 (C1402) of 16S rRNA.</text>
</comment>
<comment type="catalytic activity">
    <reaction evidence="1">
        <text>cytidine(1402) in 16S rRNA + S-adenosyl-L-methionine = N(4)-methylcytidine(1402) in 16S rRNA + S-adenosyl-L-homocysteine + H(+)</text>
        <dbReference type="Rhea" id="RHEA:42928"/>
        <dbReference type="Rhea" id="RHEA-COMP:10286"/>
        <dbReference type="Rhea" id="RHEA-COMP:10287"/>
        <dbReference type="ChEBI" id="CHEBI:15378"/>
        <dbReference type="ChEBI" id="CHEBI:57856"/>
        <dbReference type="ChEBI" id="CHEBI:59789"/>
        <dbReference type="ChEBI" id="CHEBI:74506"/>
        <dbReference type="ChEBI" id="CHEBI:82748"/>
        <dbReference type="EC" id="2.1.1.199"/>
    </reaction>
</comment>
<comment type="subcellular location">
    <subcellularLocation>
        <location evidence="1">Cytoplasm</location>
    </subcellularLocation>
</comment>
<comment type="similarity">
    <text evidence="1">Belongs to the methyltransferase superfamily. RsmH family.</text>
</comment>
<sequence length="313" mass="34878">MMENYKHTTVLLDEAVNGLNIRPDGIYIDGTFGRGGHSRLILSQLGEEGRLLAIDRDPQAIAVAKTIDDPRFSIIHGPFSALGEYVAERDLIGKIDGILLDLGVSSPQLDDAERGFSFMRDGPLDMRMDPTRGQSAAEWLQTAEEADIAWVLKTYGEERFAKRIARAIVERNREQPMTRTKELAEVVAAATPVKDKFKHPATRTFQAVRIWVNSELEEIEQALKSSLNVLAPGGRLSIISFHSLEDRIVKRFMRENSRGPQVPAGLPMTEEQLKKLGGRQLRALGKLMPGEEEVAENPRARSSVLRIAERTNA</sequence>
<protein>
    <recommendedName>
        <fullName evidence="1">Ribosomal RNA small subunit methyltransferase H</fullName>
        <ecNumber evidence="1">2.1.1.199</ecNumber>
    </recommendedName>
    <alternativeName>
        <fullName evidence="1">16S rRNA m(4)C1402 methyltransferase</fullName>
    </alternativeName>
    <alternativeName>
        <fullName evidence="1">rRNA (cytosine-N(4)-)-methyltransferase RsmH</fullName>
    </alternativeName>
</protein>
<gene>
    <name evidence="1" type="primary">rsmH</name>
    <name type="synonym">mraW</name>
    <name type="ordered locus">ECIAI1_0081</name>
</gene>
<keyword id="KW-0963">Cytoplasm</keyword>
<keyword id="KW-0489">Methyltransferase</keyword>
<keyword id="KW-0698">rRNA processing</keyword>
<keyword id="KW-0949">S-adenosyl-L-methionine</keyword>
<keyword id="KW-0808">Transferase</keyword>
<proteinExistence type="inferred from homology"/>
<reference key="1">
    <citation type="journal article" date="2009" name="PLoS Genet.">
        <title>Organised genome dynamics in the Escherichia coli species results in highly diverse adaptive paths.</title>
        <authorList>
            <person name="Touchon M."/>
            <person name="Hoede C."/>
            <person name="Tenaillon O."/>
            <person name="Barbe V."/>
            <person name="Baeriswyl S."/>
            <person name="Bidet P."/>
            <person name="Bingen E."/>
            <person name="Bonacorsi S."/>
            <person name="Bouchier C."/>
            <person name="Bouvet O."/>
            <person name="Calteau A."/>
            <person name="Chiapello H."/>
            <person name="Clermont O."/>
            <person name="Cruveiller S."/>
            <person name="Danchin A."/>
            <person name="Diard M."/>
            <person name="Dossat C."/>
            <person name="Karoui M.E."/>
            <person name="Frapy E."/>
            <person name="Garry L."/>
            <person name="Ghigo J.M."/>
            <person name="Gilles A.M."/>
            <person name="Johnson J."/>
            <person name="Le Bouguenec C."/>
            <person name="Lescat M."/>
            <person name="Mangenot S."/>
            <person name="Martinez-Jehanne V."/>
            <person name="Matic I."/>
            <person name="Nassif X."/>
            <person name="Oztas S."/>
            <person name="Petit M.A."/>
            <person name="Pichon C."/>
            <person name="Rouy Z."/>
            <person name="Ruf C.S."/>
            <person name="Schneider D."/>
            <person name="Tourret J."/>
            <person name="Vacherie B."/>
            <person name="Vallenet D."/>
            <person name="Medigue C."/>
            <person name="Rocha E.P.C."/>
            <person name="Denamur E."/>
        </authorList>
    </citation>
    <scope>NUCLEOTIDE SEQUENCE [LARGE SCALE GENOMIC DNA]</scope>
    <source>
        <strain>IAI1</strain>
    </source>
</reference>
<accession>B7M125</accession>